<proteinExistence type="inferred from homology"/>
<organism>
    <name type="scientific">Rhizobium leguminosarum</name>
    <dbReference type="NCBI Taxonomy" id="384"/>
    <lineage>
        <taxon>Bacteria</taxon>
        <taxon>Pseudomonadati</taxon>
        <taxon>Pseudomonadota</taxon>
        <taxon>Alphaproteobacteria</taxon>
        <taxon>Hyphomicrobiales</taxon>
        <taxon>Rhizobiaceae</taxon>
        <taxon>Rhizobium/Agrobacterium group</taxon>
        <taxon>Rhizobium</taxon>
    </lineage>
</organism>
<dbReference type="EC" id="4.-.-.-"/>
<dbReference type="EMBL" id="X00976">
    <property type="protein sequence ID" value="CAA25481.1"/>
    <property type="status" value="ALT_FRAME"/>
    <property type="molecule type" value="Genomic_DNA"/>
</dbReference>
<dbReference type="PIR" id="A22891">
    <property type="entry name" value="A22891"/>
</dbReference>
<dbReference type="UniPathway" id="UPA00782"/>
<dbReference type="GO" id="GO:0051539">
    <property type="term" value="F:4 iron, 4 sulfur cluster binding"/>
    <property type="evidence" value="ECO:0007669"/>
    <property type="project" value="UniProtKB-KW"/>
</dbReference>
<dbReference type="GO" id="GO:0016829">
    <property type="term" value="F:lyase activity"/>
    <property type="evidence" value="ECO:0007669"/>
    <property type="project" value="UniProtKB-KW"/>
</dbReference>
<dbReference type="GO" id="GO:0046872">
    <property type="term" value="F:metal ion binding"/>
    <property type="evidence" value="ECO:0007669"/>
    <property type="project" value="UniProtKB-KW"/>
</dbReference>
<dbReference type="GO" id="GO:0009399">
    <property type="term" value="P:nitrogen fixation"/>
    <property type="evidence" value="ECO:0007669"/>
    <property type="project" value="UniProtKB-KW"/>
</dbReference>
<dbReference type="CDD" id="cd01335">
    <property type="entry name" value="Radical_SAM"/>
    <property type="match status" value="1"/>
</dbReference>
<dbReference type="Gene3D" id="3.20.20.70">
    <property type="entry name" value="Aldolase class I"/>
    <property type="match status" value="1"/>
</dbReference>
<dbReference type="Gene3D" id="3.30.420.130">
    <property type="entry name" value="Dinitrogenase iron-molybdenum cofactor biosynthesis domain"/>
    <property type="match status" value="1"/>
</dbReference>
<dbReference type="InterPro" id="IPR013785">
    <property type="entry name" value="Aldolase_TIM"/>
</dbReference>
<dbReference type="InterPro" id="IPR003731">
    <property type="entry name" value="Di-Nase_FeMo-co_biosynth"/>
</dbReference>
<dbReference type="InterPro" id="IPR036105">
    <property type="entry name" value="DiNase_FeMo-co_biosyn_sf"/>
</dbReference>
<dbReference type="InterPro" id="IPR000385">
    <property type="entry name" value="MoaA_NifB_PqqE_Fe-S-bd_CS"/>
</dbReference>
<dbReference type="InterPro" id="IPR005980">
    <property type="entry name" value="Nase_CF_NifB"/>
</dbReference>
<dbReference type="InterPro" id="IPR007197">
    <property type="entry name" value="rSAM"/>
</dbReference>
<dbReference type="NCBIfam" id="TIGR01290">
    <property type="entry name" value="nifB"/>
    <property type="match status" value="1"/>
</dbReference>
<dbReference type="PANTHER" id="PTHR43787:SF13">
    <property type="entry name" value="FEMO COFACTOR BIOSYNTHESIS PROTEIN NIFB"/>
    <property type="match status" value="1"/>
</dbReference>
<dbReference type="PANTHER" id="PTHR43787">
    <property type="entry name" value="FEMO COFACTOR BIOSYNTHESIS PROTEIN NIFB-RELATED"/>
    <property type="match status" value="1"/>
</dbReference>
<dbReference type="Pfam" id="PF02579">
    <property type="entry name" value="Nitro_FeMo-Co"/>
    <property type="match status" value="1"/>
</dbReference>
<dbReference type="Pfam" id="PF04055">
    <property type="entry name" value="Radical_SAM"/>
    <property type="match status" value="1"/>
</dbReference>
<dbReference type="SFLD" id="SFLDF00281">
    <property type="entry name" value="FeMo_cofactor_biosynthesis_pro"/>
    <property type="match status" value="1"/>
</dbReference>
<dbReference type="SFLD" id="SFLDS00029">
    <property type="entry name" value="Radical_SAM"/>
    <property type="match status" value="1"/>
</dbReference>
<dbReference type="SUPFAM" id="SSF53146">
    <property type="entry name" value="Nitrogenase accessory factor-like"/>
    <property type="match status" value="1"/>
</dbReference>
<dbReference type="SUPFAM" id="SSF102114">
    <property type="entry name" value="Radical SAM enzymes"/>
    <property type="match status" value="1"/>
</dbReference>
<dbReference type="PROSITE" id="PS01305">
    <property type="entry name" value="MOAA_NIFB_PQQE"/>
    <property type="match status" value="1"/>
</dbReference>
<dbReference type="PROSITE" id="PS51918">
    <property type="entry name" value="RADICAL_SAM"/>
    <property type="match status" value="1"/>
</dbReference>
<gene>
    <name type="primary">fixZ</name>
</gene>
<sequence>MSEPEIKVGKTSSALFDRAPMAPSMPGGRASSSHGLSVTDDIDARIWERIKDHPCFSEXAHHYFARMHXXVAPACNIQCNYCNRKYDCTNESCPXVASVKLTPDQALRKVLAVASKVPELSVIXVAGPGDACYDWRKTVATFEGVAREIPDMKLCISTNGLALPDHVDELADMNIDHVTITINMVDPEIGAKIYPWIIHGHRRYTGIAAAGILHERQMLGLELLTKRGILTKINSVMIPGVNDTHLVEVNRWIRDRGAFMHNVVPLISKPSHGTYYGLTGQRCPEPFELKALQDCLDGNIKLMRHCQQCRADAIGLLGDDREREFALDQISTKVEFDTSKREAYRKLVQHERGDQLAAKLDANKAVKSLGSSGTLAVAVATKGGGRINEHFGQARELQVYAVSLKGINLVGHXXVEQYCLGGIGEKATLDHTIVALDGIDILLSSKIGDCPKKRLAETGVRASDA</sequence>
<comment type="function">
    <text evidence="1">Involved in the biosynthesis of the iron-molybdenum cofactor (FeMo-co or M-cluster) found in the dinitrogenase enzyme of the nitrogenase complex in nitrogen-fixing microorganisms. Catalyzes the crucial step of radical SAM-dependent carbide insertion that occurs concomitant with the insertion of a 9th sulfur and the rearrangement/coupling of two [4Fe-4S] clusters into a [8Fe-9S-C] cluster, the precursor to the M-cluster.</text>
</comment>
<comment type="cofactor">
    <cofactor evidence="1">
        <name>[4Fe-4S] cluster</name>
        <dbReference type="ChEBI" id="CHEBI:49883"/>
    </cofactor>
    <text evidence="1">Binds 3 [4Fe-4S] clusters per monomer. One cluster is coordinated with 3 cysteines and an exchangeable S-adenosyl-L-methionine. The two others probably act as substrate.</text>
</comment>
<comment type="pathway">
    <text evidence="1">Cofactor biosynthesis; Fe-Mo cofactor biosynthesis.</text>
</comment>
<comment type="similarity">
    <text evidence="5">Belongs to the radical SAM superfamily. NifB family.</text>
</comment>
<comment type="sequence caution" evidence="5">
    <conflict type="frameshift">
        <sequence resource="EMBL-CDS" id="CAA25481"/>
    </conflict>
</comment>
<feature type="chain" id="PRO_0000153042" description="FeMo cofactor biosynthesis protein FixZ">
    <location>
        <begin position="1"/>
        <end position="465" status="greater than"/>
    </location>
</feature>
<feature type="domain" description="Radical SAM core" evidence="3">
    <location>
        <begin position="61"/>
        <end position="312"/>
    </location>
</feature>
<feature type="region of interest" description="Disordered" evidence="4">
    <location>
        <begin position="1"/>
        <end position="36"/>
    </location>
</feature>
<feature type="binding site" evidence="2">
    <location>
        <position position="75"/>
    </location>
    <ligand>
        <name>[4Fe-4S] cluster</name>
        <dbReference type="ChEBI" id="CHEBI:49883"/>
        <label>1</label>
        <note>4Fe-4S-S-AdoMet</note>
    </ligand>
</feature>
<feature type="binding site" evidence="2">
    <location>
        <position position="79"/>
    </location>
    <ligand>
        <name>[4Fe-4S] cluster</name>
        <dbReference type="ChEBI" id="CHEBI:49883"/>
        <label>1</label>
        <note>4Fe-4S-S-AdoMet</note>
    </ligand>
</feature>
<feature type="binding site" evidence="2">
    <location>
        <position position="81"/>
    </location>
    <ligand>
        <name>S-adenosyl-L-methionine</name>
        <dbReference type="ChEBI" id="CHEBI:59789"/>
    </ligand>
</feature>
<feature type="binding site" evidence="2">
    <location>
        <position position="82"/>
    </location>
    <ligand>
        <name>[4Fe-4S] cluster</name>
        <dbReference type="ChEBI" id="CHEBI:49883"/>
        <label>1</label>
        <note>4Fe-4S-S-AdoMet</note>
    </ligand>
</feature>
<feature type="binding site" evidence="2">
    <location>
        <position position="129"/>
    </location>
    <ligand>
        <name>S-adenosyl-L-methionine</name>
        <dbReference type="ChEBI" id="CHEBI:59789"/>
    </ligand>
</feature>
<feature type="binding site" evidence="2">
    <location>
        <position position="181"/>
    </location>
    <ligand>
        <name>S-adenosyl-L-methionine</name>
        <dbReference type="ChEBI" id="CHEBI:59789"/>
    </ligand>
</feature>
<feature type="binding site" evidence="2">
    <location>
        <position position="233"/>
    </location>
    <ligand>
        <name>S-adenosyl-L-methionine</name>
        <dbReference type="ChEBI" id="CHEBI:59789"/>
    </ligand>
</feature>
<feature type="binding site" evidence="1">
    <location>
        <position position="306"/>
    </location>
    <ligand>
        <name>[4Fe-4S] cluster</name>
        <dbReference type="ChEBI" id="CHEBI:49883"/>
        <label>2</label>
    </ligand>
</feature>
<feature type="binding site" evidence="1">
    <location>
        <position position="309"/>
    </location>
    <ligand>
        <name>[4Fe-4S] cluster</name>
        <dbReference type="ChEBI" id="CHEBI:49883"/>
        <label>2</label>
    </ligand>
</feature>
<feature type="non-terminal residue">
    <location>
        <position position="465"/>
    </location>
</feature>
<evidence type="ECO:0000250" key="1">
    <source>
        <dbReference type="UniProtKB" id="D5VRM1"/>
    </source>
</evidence>
<evidence type="ECO:0000250" key="2">
    <source>
        <dbReference type="UniProtKB" id="P69848"/>
    </source>
</evidence>
<evidence type="ECO:0000255" key="3">
    <source>
        <dbReference type="PROSITE-ProRule" id="PRU01266"/>
    </source>
</evidence>
<evidence type="ECO:0000256" key="4">
    <source>
        <dbReference type="SAM" id="MobiDB-lite"/>
    </source>
</evidence>
<evidence type="ECO:0000305" key="5"/>
<geneLocation type="plasmid">
    <name>sym pRL1JI</name>
</geneLocation>
<keyword id="KW-0004">4Fe-4S</keyword>
<keyword id="KW-0408">Iron</keyword>
<keyword id="KW-0411">Iron-sulfur</keyword>
<keyword id="KW-0456">Lyase</keyword>
<keyword id="KW-0479">Metal-binding</keyword>
<keyword id="KW-0535">Nitrogen fixation</keyword>
<keyword id="KW-0614">Plasmid</keyword>
<keyword id="KW-0949">S-adenosyl-L-methionine</keyword>
<reference key="1">
    <citation type="journal article" date="1984" name="Nucleic Acids Res.">
        <title>Identification and DNA sequence of fixZ, a nifB-like gene from Rhizobium leguminosarum.</title>
        <authorList>
            <person name="Rossen L."/>
            <person name="Ma Q.-S."/>
            <person name="Mudd E.A."/>
            <person name="Johnston A.W.B."/>
            <person name="Downie J.A."/>
        </authorList>
    </citation>
    <scope>NUCLEOTIDE SEQUENCE [GENOMIC DNA]</scope>
</reference>
<accession>P07748</accession>
<name>FIXZ_RHILE</name>
<protein>
    <recommendedName>
        <fullName>FeMo cofactor biosynthesis protein FixZ</fullName>
        <ecNumber>4.-.-.-</ecNumber>
    </recommendedName>
    <alternativeName>
        <fullName>Nitrogen fixation protein FixZ</fullName>
    </alternativeName>
</protein>